<dbReference type="EMBL" id="CR555306">
    <property type="protein sequence ID" value="CAI07744.1"/>
    <property type="molecule type" value="Genomic_DNA"/>
</dbReference>
<dbReference type="RefSeq" id="WP_011237458.1">
    <property type="nucleotide sequence ID" value="NC_006513.1"/>
</dbReference>
<dbReference type="SMR" id="Q5P4L8"/>
<dbReference type="STRING" id="76114.ebA2875"/>
<dbReference type="KEGG" id="eba:ebA2875"/>
<dbReference type="eggNOG" id="COG0393">
    <property type="taxonomic scope" value="Bacteria"/>
</dbReference>
<dbReference type="HOGENOM" id="CLU_117144_3_2_4"/>
<dbReference type="OrthoDB" id="9796448at2"/>
<dbReference type="Proteomes" id="UP000006552">
    <property type="component" value="Chromosome"/>
</dbReference>
<dbReference type="Gene3D" id="3.30.110.70">
    <property type="entry name" value="Hypothetical protein apc22750. Chain B"/>
    <property type="match status" value="1"/>
</dbReference>
<dbReference type="HAMAP" id="MF_00338">
    <property type="entry name" value="UPF0145"/>
    <property type="match status" value="1"/>
</dbReference>
<dbReference type="InterPro" id="IPR035439">
    <property type="entry name" value="UPF0145_dom_sf"/>
</dbReference>
<dbReference type="InterPro" id="IPR002765">
    <property type="entry name" value="UPF0145_YbjQ-like"/>
</dbReference>
<dbReference type="NCBIfam" id="NF002776">
    <property type="entry name" value="PRK02877.1"/>
    <property type="match status" value="1"/>
</dbReference>
<dbReference type="PANTHER" id="PTHR34068">
    <property type="entry name" value="UPF0145 PROTEIN YBJQ"/>
    <property type="match status" value="1"/>
</dbReference>
<dbReference type="PANTHER" id="PTHR34068:SF1">
    <property type="entry name" value="UPF0145 PROTEIN YBJQ"/>
    <property type="match status" value="1"/>
</dbReference>
<dbReference type="Pfam" id="PF01906">
    <property type="entry name" value="YbjQ_1"/>
    <property type="match status" value="1"/>
</dbReference>
<dbReference type="SUPFAM" id="SSF117782">
    <property type="entry name" value="YbjQ-like"/>
    <property type="match status" value="1"/>
</dbReference>
<sequence>MLMTTTPTIEGRTIRSYHGVVAGEAIIGANVFKDMFAAVRDIVGGRSGSYEKTLRSARETAFEDLAEAAGRLGANAVVGVDIDYEVLGEKNGMLMVAVSGTAVTVE</sequence>
<reference key="1">
    <citation type="journal article" date="2005" name="Arch. Microbiol.">
        <title>The genome sequence of an anaerobic aromatic-degrading denitrifying bacterium, strain EbN1.</title>
        <authorList>
            <person name="Rabus R."/>
            <person name="Kube M."/>
            <person name="Heider J."/>
            <person name="Beck A."/>
            <person name="Heitmann K."/>
            <person name="Widdel F."/>
            <person name="Reinhardt R."/>
        </authorList>
    </citation>
    <scope>NUCLEOTIDE SEQUENCE [LARGE SCALE GENOMIC DNA]</scope>
    <source>
        <strain>DSM 19018 / LMG 30748 / EbN1</strain>
    </source>
</reference>
<feature type="chain" id="PRO_0000225800" description="UPF0145 protein AZOSEA16190">
    <location>
        <begin position="1"/>
        <end position="106"/>
    </location>
</feature>
<gene>
    <name type="ordered locus">AZOSEA16190</name>
    <name type="ORF">ebA2875</name>
</gene>
<organism>
    <name type="scientific">Aromatoleum aromaticum (strain DSM 19018 / LMG 30748 / EbN1)</name>
    <name type="common">Azoarcus sp. (strain EbN1)</name>
    <dbReference type="NCBI Taxonomy" id="76114"/>
    <lineage>
        <taxon>Bacteria</taxon>
        <taxon>Pseudomonadati</taxon>
        <taxon>Pseudomonadota</taxon>
        <taxon>Betaproteobacteria</taxon>
        <taxon>Rhodocyclales</taxon>
        <taxon>Rhodocyclaceae</taxon>
        <taxon>Aromatoleum</taxon>
    </lineage>
</organism>
<keyword id="KW-1185">Reference proteome</keyword>
<proteinExistence type="inferred from homology"/>
<protein>
    <recommendedName>
        <fullName evidence="1">UPF0145 protein AZOSEA16190</fullName>
    </recommendedName>
</protein>
<accession>Q5P4L8</accession>
<comment type="similarity">
    <text evidence="1">Belongs to the UPF0145 family.</text>
</comment>
<name>Y1619_AROAE</name>
<evidence type="ECO:0000255" key="1">
    <source>
        <dbReference type="HAMAP-Rule" id="MF_00338"/>
    </source>
</evidence>